<organism>
    <name type="scientific">Actinobacillus pleuropneumoniae serotype 3 (strain JL03)</name>
    <dbReference type="NCBI Taxonomy" id="434271"/>
    <lineage>
        <taxon>Bacteria</taxon>
        <taxon>Pseudomonadati</taxon>
        <taxon>Pseudomonadota</taxon>
        <taxon>Gammaproteobacteria</taxon>
        <taxon>Pasteurellales</taxon>
        <taxon>Pasteurellaceae</taxon>
        <taxon>Actinobacillus</taxon>
    </lineage>
</organism>
<reference key="1">
    <citation type="journal article" date="2008" name="PLoS ONE">
        <title>Genome biology of Actinobacillus pleuropneumoniae JL03, an isolate of serotype 3 prevalent in China.</title>
        <authorList>
            <person name="Xu Z."/>
            <person name="Zhou Y."/>
            <person name="Li L."/>
            <person name="Zhou R."/>
            <person name="Xiao S."/>
            <person name="Wan Y."/>
            <person name="Zhang S."/>
            <person name="Wang K."/>
            <person name="Li W."/>
            <person name="Li L."/>
            <person name="Jin H."/>
            <person name="Kang M."/>
            <person name="Dalai B."/>
            <person name="Li T."/>
            <person name="Liu L."/>
            <person name="Cheng Y."/>
            <person name="Zhang L."/>
            <person name="Xu T."/>
            <person name="Zheng H."/>
            <person name="Pu S."/>
            <person name="Wang B."/>
            <person name="Gu W."/>
            <person name="Zhang X.L."/>
            <person name="Zhu G.-F."/>
            <person name="Wang S."/>
            <person name="Zhao G.-P."/>
            <person name="Chen H."/>
        </authorList>
    </citation>
    <scope>NUCLEOTIDE SEQUENCE [LARGE SCALE GENOMIC DNA]</scope>
    <source>
        <strain>JL03</strain>
    </source>
</reference>
<gene>
    <name evidence="1" type="primary">nhaA</name>
    <name type="ordered locus">APJL_1994</name>
</gene>
<evidence type="ECO:0000255" key="1">
    <source>
        <dbReference type="HAMAP-Rule" id="MF_01844"/>
    </source>
</evidence>
<comment type="function">
    <text evidence="1">Na(+)/H(+) antiporter that extrudes sodium in exchange for external protons.</text>
</comment>
<comment type="catalytic activity">
    <reaction evidence="1">
        <text>Na(+)(in) + 2 H(+)(out) = Na(+)(out) + 2 H(+)(in)</text>
        <dbReference type="Rhea" id="RHEA:29251"/>
        <dbReference type="ChEBI" id="CHEBI:15378"/>
        <dbReference type="ChEBI" id="CHEBI:29101"/>
    </reaction>
    <physiologicalReaction direction="left-to-right" evidence="1">
        <dbReference type="Rhea" id="RHEA:29252"/>
    </physiologicalReaction>
</comment>
<comment type="subcellular location">
    <subcellularLocation>
        <location evidence="1">Cell inner membrane</location>
        <topology evidence="1">Multi-pass membrane protein</topology>
    </subcellularLocation>
</comment>
<comment type="similarity">
    <text evidence="1">Belongs to the NhaA Na(+)/H(+) (TC 2.A.33) antiporter family.</text>
</comment>
<feature type="chain" id="PRO_0000334220" description="Na(+)/H(+) antiporter NhaA">
    <location>
        <begin position="1"/>
        <end position="394"/>
    </location>
</feature>
<feature type="transmembrane region" description="Helical" evidence="1">
    <location>
        <begin position="11"/>
        <end position="31"/>
    </location>
</feature>
<feature type="transmembrane region" description="Helical" evidence="1">
    <location>
        <begin position="59"/>
        <end position="79"/>
    </location>
</feature>
<feature type="transmembrane region" description="Helical" evidence="1">
    <location>
        <begin position="95"/>
        <end position="115"/>
    </location>
</feature>
<feature type="transmembrane region" description="Helical" evidence="1">
    <location>
        <begin position="125"/>
        <end position="145"/>
    </location>
</feature>
<feature type="transmembrane region" description="Helical" evidence="1">
    <location>
        <begin position="155"/>
        <end position="175"/>
    </location>
</feature>
<feature type="transmembrane region" description="Helical" evidence="1">
    <location>
        <begin position="177"/>
        <end position="197"/>
    </location>
</feature>
<feature type="transmembrane region" description="Helical" evidence="1">
    <location>
        <begin position="203"/>
        <end position="220"/>
    </location>
</feature>
<feature type="transmembrane region" description="Helical" evidence="1">
    <location>
        <begin position="254"/>
        <end position="274"/>
    </location>
</feature>
<feature type="transmembrane region" description="Helical" evidence="1">
    <location>
        <begin position="296"/>
        <end position="316"/>
    </location>
</feature>
<feature type="transmembrane region" description="Helical" evidence="1">
    <location>
        <begin position="328"/>
        <end position="348"/>
    </location>
</feature>
<feature type="transmembrane region" description="Helical" evidence="1">
    <location>
        <begin position="365"/>
        <end position="385"/>
    </location>
</feature>
<sequence>MLKQIQKFLKLEAASGILLLVSALLAMIFANTDLNQLYFSFLQTEVAIKFGAFSIDKPLLMWVNDGFMAVFFILVGMEVKRELFEGSLSSYQKAIFPAVAALGGMIIPALVYWFINQNSPEYQQGWAIPMATDIAFALGIVALLSKQVPPALKVFLLALAIIDDLGAIIVIALFFSHEMSMQALTIASIAIVILVAMNRYKVTGLINYAIIGTILWASVLKSGVHATLAGVIIGFCIPLRGKNGEAPLHHLEHALAPWCSFAILPLFAFSNAGVSLEGMSLDKLASPLPLGVALGLIIGKPVGVFLFSYVAVLLGIAKVPEGINLKQIFAIAVLCGIGFTMSMFIAGLAFGEEDASESVLALARLGILMGTFVAAIIGYFLLKITTKPSLMKAA</sequence>
<name>NHAA_ACTPJ</name>
<dbReference type="EMBL" id="CP000687">
    <property type="protein sequence ID" value="ABY70542.1"/>
    <property type="molecule type" value="Genomic_DNA"/>
</dbReference>
<dbReference type="RefSeq" id="WP_005602843.1">
    <property type="nucleotide sequence ID" value="NC_010278.1"/>
</dbReference>
<dbReference type="SMR" id="B0BTX5"/>
<dbReference type="KEGG" id="apj:APJL_1994"/>
<dbReference type="HOGENOM" id="CLU_015803_1_0_6"/>
<dbReference type="Proteomes" id="UP000008547">
    <property type="component" value="Chromosome"/>
</dbReference>
<dbReference type="GO" id="GO:0005886">
    <property type="term" value="C:plasma membrane"/>
    <property type="evidence" value="ECO:0007669"/>
    <property type="project" value="UniProtKB-SubCell"/>
</dbReference>
<dbReference type="GO" id="GO:0015385">
    <property type="term" value="F:sodium:proton antiporter activity"/>
    <property type="evidence" value="ECO:0007669"/>
    <property type="project" value="TreeGrafter"/>
</dbReference>
<dbReference type="GO" id="GO:0006885">
    <property type="term" value="P:regulation of pH"/>
    <property type="evidence" value="ECO:0007669"/>
    <property type="project" value="InterPro"/>
</dbReference>
<dbReference type="Gene3D" id="1.20.1530.10">
    <property type="entry name" value="Na+/H+ antiporter like domain"/>
    <property type="match status" value="1"/>
</dbReference>
<dbReference type="HAMAP" id="MF_01844">
    <property type="entry name" value="NhaA"/>
    <property type="match status" value="1"/>
</dbReference>
<dbReference type="InterPro" id="IPR023171">
    <property type="entry name" value="Na/H_antiporter_dom_sf"/>
</dbReference>
<dbReference type="InterPro" id="IPR004670">
    <property type="entry name" value="NhaA"/>
</dbReference>
<dbReference type="NCBIfam" id="TIGR00773">
    <property type="entry name" value="NhaA"/>
    <property type="match status" value="1"/>
</dbReference>
<dbReference type="NCBIfam" id="NF007111">
    <property type="entry name" value="PRK09560.1"/>
    <property type="match status" value="1"/>
</dbReference>
<dbReference type="NCBIfam" id="NF007112">
    <property type="entry name" value="PRK09561.1"/>
    <property type="match status" value="1"/>
</dbReference>
<dbReference type="PANTHER" id="PTHR30341:SF0">
    <property type="entry name" value="NA(+)_H(+) ANTIPORTER NHAA"/>
    <property type="match status" value="1"/>
</dbReference>
<dbReference type="PANTHER" id="PTHR30341">
    <property type="entry name" value="SODIUM ION/PROTON ANTIPORTER NHAA-RELATED"/>
    <property type="match status" value="1"/>
</dbReference>
<dbReference type="Pfam" id="PF06965">
    <property type="entry name" value="Na_H_antiport_1"/>
    <property type="match status" value="1"/>
</dbReference>
<proteinExistence type="inferred from homology"/>
<keyword id="KW-0050">Antiport</keyword>
<keyword id="KW-0997">Cell inner membrane</keyword>
<keyword id="KW-1003">Cell membrane</keyword>
<keyword id="KW-0406">Ion transport</keyword>
<keyword id="KW-0472">Membrane</keyword>
<keyword id="KW-0915">Sodium</keyword>
<keyword id="KW-0739">Sodium transport</keyword>
<keyword id="KW-0812">Transmembrane</keyword>
<keyword id="KW-1133">Transmembrane helix</keyword>
<keyword id="KW-0813">Transport</keyword>
<protein>
    <recommendedName>
        <fullName evidence="1">Na(+)/H(+) antiporter NhaA</fullName>
    </recommendedName>
    <alternativeName>
        <fullName evidence="1">Sodium/proton antiporter NhaA</fullName>
    </alternativeName>
</protein>
<accession>B0BTX5</accession>